<gene>
    <name evidence="1" type="primary">rplV</name>
    <name type="ordered locus">Nmul_A0772</name>
</gene>
<evidence type="ECO:0000255" key="1">
    <source>
        <dbReference type="HAMAP-Rule" id="MF_01331"/>
    </source>
</evidence>
<evidence type="ECO:0000305" key="2"/>
<accession>Q2YAZ2</accession>
<dbReference type="EMBL" id="CP000103">
    <property type="protein sequence ID" value="ABB74079.1"/>
    <property type="molecule type" value="Genomic_DNA"/>
</dbReference>
<dbReference type="RefSeq" id="WP_011380128.1">
    <property type="nucleotide sequence ID" value="NC_007614.1"/>
</dbReference>
<dbReference type="SMR" id="Q2YAZ2"/>
<dbReference type="STRING" id="323848.Nmul_A0772"/>
<dbReference type="KEGG" id="nmu:Nmul_A0772"/>
<dbReference type="eggNOG" id="COG0091">
    <property type="taxonomic scope" value="Bacteria"/>
</dbReference>
<dbReference type="HOGENOM" id="CLU_083987_3_3_4"/>
<dbReference type="OrthoDB" id="9805969at2"/>
<dbReference type="Proteomes" id="UP000002718">
    <property type="component" value="Chromosome"/>
</dbReference>
<dbReference type="GO" id="GO:0022625">
    <property type="term" value="C:cytosolic large ribosomal subunit"/>
    <property type="evidence" value="ECO:0007669"/>
    <property type="project" value="TreeGrafter"/>
</dbReference>
<dbReference type="GO" id="GO:0019843">
    <property type="term" value="F:rRNA binding"/>
    <property type="evidence" value="ECO:0007669"/>
    <property type="project" value="UniProtKB-UniRule"/>
</dbReference>
<dbReference type="GO" id="GO:0003735">
    <property type="term" value="F:structural constituent of ribosome"/>
    <property type="evidence" value="ECO:0007669"/>
    <property type="project" value="InterPro"/>
</dbReference>
<dbReference type="GO" id="GO:0006412">
    <property type="term" value="P:translation"/>
    <property type="evidence" value="ECO:0007669"/>
    <property type="project" value="UniProtKB-UniRule"/>
</dbReference>
<dbReference type="CDD" id="cd00336">
    <property type="entry name" value="Ribosomal_L22"/>
    <property type="match status" value="1"/>
</dbReference>
<dbReference type="FunFam" id="3.90.470.10:FF:000001">
    <property type="entry name" value="50S ribosomal protein L22"/>
    <property type="match status" value="1"/>
</dbReference>
<dbReference type="Gene3D" id="3.90.470.10">
    <property type="entry name" value="Ribosomal protein L22/L17"/>
    <property type="match status" value="1"/>
</dbReference>
<dbReference type="HAMAP" id="MF_01331_B">
    <property type="entry name" value="Ribosomal_uL22_B"/>
    <property type="match status" value="1"/>
</dbReference>
<dbReference type="InterPro" id="IPR001063">
    <property type="entry name" value="Ribosomal_uL22"/>
</dbReference>
<dbReference type="InterPro" id="IPR005727">
    <property type="entry name" value="Ribosomal_uL22_bac/chlpt-type"/>
</dbReference>
<dbReference type="InterPro" id="IPR047867">
    <property type="entry name" value="Ribosomal_uL22_bac/org-type"/>
</dbReference>
<dbReference type="InterPro" id="IPR036394">
    <property type="entry name" value="Ribosomal_uL22_sf"/>
</dbReference>
<dbReference type="NCBIfam" id="TIGR01044">
    <property type="entry name" value="rplV_bact"/>
    <property type="match status" value="1"/>
</dbReference>
<dbReference type="PANTHER" id="PTHR13501">
    <property type="entry name" value="CHLOROPLAST 50S RIBOSOMAL PROTEIN L22-RELATED"/>
    <property type="match status" value="1"/>
</dbReference>
<dbReference type="PANTHER" id="PTHR13501:SF8">
    <property type="entry name" value="LARGE RIBOSOMAL SUBUNIT PROTEIN UL22M"/>
    <property type="match status" value="1"/>
</dbReference>
<dbReference type="Pfam" id="PF00237">
    <property type="entry name" value="Ribosomal_L22"/>
    <property type="match status" value="1"/>
</dbReference>
<dbReference type="SUPFAM" id="SSF54843">
    <property type="entry name" value="Ribosomal protein L22"/>
    <property type="match status" value="1"/>
</dbReference>
<protein>
    <recommendedName>
        <fullName evidence="1">Large ribosomal subunit protein uL22</fullName>
    </recommendedName>
    <alternativeName>
        <fullName evidence="2">50S ribosomal protein L22</fullName>
    </alternativeName>
</protein>
<feature type="chain" id="PRO_0000243177" description="Large ribosomal subunit protein uL22">
    <location>
        <begin position="1"/>
        <end position="115"/>
    </location>
</feature>
<comment type="function">
    <text evidence="1">This protein binds specifically to 23S rRNA; its binding is stimulated by other ribosomal proteins, e.g. L4, L17, and L20. It is important during the early stages of 50S assembly. It makes multiple contacts with different domains of the 23S rRNA in the assembled 50S subunit and ribosome (By similarity).</text>
</comment>
<comment type="function">
    <text evidence="1">The globular domain of the protein is located near the polypeptide exit tunnel on the outside of the subunit, while an extended beta-hairpin is found that lines the wall of the exit tunnel in the center of the 70S ribosome.</text>
</comment>
<comment type="subunit">
    <text evidence="1">Part of the 50S ribosomal subunit.</text>
</comment>
<comment type="similarity">
    <text evidence="1">Belongs to the universal ribosomal protein uL22 family.</text>
</comment>
<keyword id="KW-1185">Reference proteome</keyword>
<keyword id="KW-0687">Ribonucleoprotein</keyword>
<keyword id="KW-0689">Ribosomal protein</keyword>
<keyword id="KW-0694">RNA-binding</keyword>
<keyword id="KW-0699">rRNA-binding</keyword>
<organism>
    <name type="scientific">Nitrosospira multiformis (strain ATCC 25196 / NCIMB 11849 / C 71)</name>
    <dbReference type="NCBI Taxonomy" id="323848"/>
    <lineage>
        <taxon>Bacteria</taxon>
        <taxon>Pseudomonadati</taxon>
        <taxon>Pseudomonadota</taxon>
        <taxon>Betaproteobacteria</taxon>
        <taxon>Nitrosomonadales</taxon>
        <taxon>Nitrosomonadaceae</taxon>
        <taxon>Nitrosospira</taxon>
    </lineage>
</organism>
<proteinExistence type="inferred from homology"/>
<reference key="1">
    <citation type="submission" date="2005-08" db="EMBL/GenBank/DDBJ databases">
        <title>Complete sequence of chromosome 1 of Nitrosospira multiformis ATCC 25196.</title>
        <authorList>
            <person name="Copeland A."/>
            <person name="Lucas S."/>
            <person name="Lapidus A."/>
            <person name="Barry K."/>
            <person name="Detter J.C."/>
            <person name="Glavina T."/>
            <person name="Hammon N."/>
            <person name="Israni S."/>
            <person name="Pitluck S."/>
            <person name="Chain P."/>
            <person name="Malfatti S."/>
            <person name="Shin M."/>
            <person name="Vergez L."/>
            <person name="Schmutz J."/>
            <person name="Larimer F."/>
            <person name="Land M."/>
            <person name="Hauser L."/>
            <person name="Kyrpides N."/>
            <person name="Lykidis A."/>
            <person name="Richardson P."/>
        </authorList>
    </citation>
    <scope>NUCLEOTIDE SEQUENCE [LARGE SCALE GENOMIC DNA]</scope>
    <source>
        <strain>ATCC 25196 / NCIMB 11849 / C 71</strain>
    </source>
</reference>
<name>RL22_NITMU</name>
<sequence>METTAVLRGVRLSEQKGRLVADQIRGLPVERALNLLAFSPKKAAVIIRKLLESAIANAEHNEGADIDELKVSRIYVDRGPSLMRTSARAKGRGNRIVKPTCHILLTVGDKASNKK</sequence>